<feature type="chain" id="PRO_1000092926" description="Peptidyl-tRNA hydrolase">
    <location>
        <begin position="1"/>
        <end position="179"/>
    </location>
</feature>
<feature type="active site" description="Proton acceptor" evidence="1">
    <location>
        <position position="20"/>
    </location>
</feature>
<feature type="binding site" evidence="1">
    <location>
        <position position="15"/>
    </location>
    <ligand>
        <name>tRNA</name>
        <dbReference type="ChEBI" id="CHEBI:17843"/>
    </ligand>
</feature>
<feature type="binding site" evidence="1">
    <location>
        <position position="66"/>
    </location>
    <ligand>
        <name>tRNA</name>
        <dbReference type="ChEBI" id="CHEBI:17843"/>
    </ligand>
</feature>
<feature type="binding site" evidence="1">
    <location>
        <position position="68"/>
    </location>
    <ligand>
        <name>tRNA</name>
        <dbReference type="ChEBI" id="CHEBI:17843"/>
    </ligand>
</feature>
<feature type="binding site" evidence="1">
    <location>
        <position position="114"/>
    </location>
    <ligand>
        <name>tRNA</name>
        <dbReference type="ChEBI" id="CHEBI:17843"/>
    </ligand>
</feature>
<feature type="site" description="Discriminates between blocked and unblocked aminoacyl-tRNA" evidence="1">
    <location>
        <position position="10"/>
    </location>
</feature>
<feature type="site" description="Stabilizes the basic form of H active site to accept a proton" evidence="1">
    <location>
        <position position="93"/>
    </location>
</feature>
<keyword id="KW-0963">Cytoplasm</keyword>
<keyword id="KW-0378">Hydrolase</keyword>
<keyword id="KW-0694">RNA-binding</keyword>
<keyword id="KW-0820">tRNA-binding</keyword>
<name>PTH_CHLTB</name>
<accession>B0BAQ6</accession>
<proteinExistence type="inferred from homology"/>
<evidence type="ECO:0000255" key="1">
    <source>
        <dbReference type="HAMAP-Rule" id="MF_00083"/>
    </source>
</evidence>
<organism>
    <name type="scientific">Chlamydia trachomatis serovar L2b (strain UCH-1/proctitis)</name>
    <dbReference type="NCBI Taxonomy" id="471473"/>
    <lineage>
        <taxon>Bacteria</taxon>
        <taxon>Pseudomonadati</taxon>
        <taxon>Chlamydiota</taxon>
        <taxon>Chlamydiia</taxon>
        <taxon>Chlamydiales</taxon>
        <taxon>Chlamydiaceae</taxon>
        <taxon>Chlamydia/Chlamydophila group</taxon>
        <taxon>Chlamydia</taxon>
    </lineage>
</organism>
<comment type="function">
    <text evidence="1">Hydrolyzes ribosome-free peptidyl-tRNAs (with 1 or more amino acids incorporated), which drop off the ribosome during protein synthesis, or as a result of ribosome stalling.</text>
</comment>
<comment type="function">
    <text evidence="1">Catalyzes the release of premature peptidyl moieties from peptidyl-tRNA molecules trapped in stalled 50S ribosomal subunits, and thus maintains levels of free tRNAs and 50S ribosomes.</text>
</comment>
<comment type="catalytic activity">
    <reaction evidence="1">
        <text>an N-acyl-L-alpha-aminoacyl-tRNA + H2O = an N-acyl-L-amino acid + a tRNA + H(+)</text>
        <dbReference type="Rhea" id="RHEA:54448"/>
        <dbReference type="Rhea" id="RHEA-COMP:10123"/>
        <dbReference type="Rhea" id="RHEA-COMP:13883"/>
        <dbReference type="ChEBI" id="CHEBI:15377"/>
        <dbReference type="ChEBI" id="CHEBI:15378"/>
        <dbReference type="ChEBI" id="CHEBI:59874"/>
        <dbReference type="ChEBI" id="CHEBI:78442"/>
        <dbReference type="ChEBI" id="CHEBI:138191"/>
        <dbReference type="EC" id="3.1.1.29"/>
    </reaction>
</comment>
<comment type="subunit">
    <text evidence="1">Monomer.</text>
</comment>
<comment type="subcellular location">
    <subcellularLocation>
        <location evidence="1">Cytoplasm</location>
    </subcellularLocation>
</comment>
<comment type="similarity">
    <text evidence="1">Belongs to the PTH family.</text>
</comment>
<dbReference type="EC" id="3.1.1.29" evidence="1"/>
<dbReference type="EMBL" id="AM884177">
    <property type="protein sequence ID" value="CAP06568.1"/>
    <property type="molecule type" value="Genomic_DNA"/>
</dbReference>
<dbReference type="RefSeq" id="WP_012263561.1">
    <property type="nucleotide sequence ID" value="NC_010280.2"/>
</dbReference>
<dbReference type="SMR" id="B0BAQ6"/>
<dbReference type="KEGG" id="ctl:CTLon_0170"/>
<dbReference type="HOGENOM" id="CLU_062456_3_1_0"/>
<dbReference type="Proteomes" id="UP001154401">
    <property type="component" value="Chromosome"/>
</dbReference>
<dbReference type="GO" id="GO:0005737">
    <property type="term" value="C:cytoplasm"/>
    <property type="evidence" value="ECO:0007669"/>
    <property type="project" value="UniProtKB-SubCell"/>
</dbReference>
<dbReference type="GO" id="GO:0004045">
    <property type="term" value="F:peptidyl-tRNA hydrolase activity"/>
    <property type="evidence" value="ECO:0007669"/>
    <property type="project" value="UniProtKB-UniRule"/>
</dbReference>
<dbReference type="GO" id="GO:0000049">
    <property type="term" value="F:tRNA binding"/>
    <property type="evidence" value="ECO:0007669"/>
    <property type="project" value="UniProtKB-UniRule"/>
</dbReference>
<dbReference type="GO" id="GO:0006515">
    <property type="term" value="P:protein quality control for misfolded or incompletely synthesized proteins"/>
    <property type="evidence" value="ECO:0007669"/>
    <property type="project" value="UniProtKB-UniRule"/>
</dbReference>
<dbReference type="GO" id="GO:0072344">
    <property type="term" value="P:rescue of stalled ribosome"/>
    <property type="evidence" value="ECO:0007669"/>
    <property type="project" value="UniProtKB-UniRule"/>
</dbReference>
<dbReference type="CDD" id="cd00462">
    <property type="entry name" value="PTH"/>
    <property type="match status" value="1"/>
</dbReference>
<dbReference type="FunFam" id="3.40.50.1470:FF:000001">
    <property type="entry name" value="Peptidyl-tRNA hydrolase"/>
    <property type="match status" value="1"/>
</dbReference>
<dbReference type="Gene3D" id="3.40.50.1470">
    <property type="entry name" value="Peptidyl-tRNA hydrolase"/>
    <property type="match status" value="1"/>
</dbReference>
<dbReference type="HAMAP" id="MF_00083">
    <property type="entry name" value="Pept_tRNA_hydro_bact"/>
    <property type="match status" value="1"/>
</dbReference>
<dbReference type="InterPro" id="IPR001328">
    <property type="entry name" value="Pept_tRNA_hydro"/>
</dbReference>
<dbReference type="InterPro" id="IPR018171">
    <property type="entry name" value="Pept_tRNA_hydro_CS"/>
</dbReference>
<dbReference type="InterPro" id="IPR036416">
    <property type="entry name" value="Pept_tRNA_hydro_sf"/>
</dbReference>
<dbReference type="NCBIfam" id="TIGR00447">
    <property type="entry name" value="pth"/>
    <property type="match status" value="1"/>
</dbReference>
<dbReference type="PANTHER" id="PTHR17224">
    <property type="entry name" value="PEPTIDYL-TRNA HYDROLASE"/>
    <property type="match status" value="1"/>
</dbReference>
<dbReference type="PANTHER" id="PTHR17224:SF1">
    <property type="entry name" value="PEPTIDYL-TRNA HYDROLASE"/>
    <property type="match status" value="1"/>
</dbReference>
<dbReference type="Pfam" id="PF01195">
    <property type="entry name" value="Pept_tRNA_hydro"/>
    <property type="match status" value="1"/>
</dbReference>
<dbReference type="SUPFAM" id="SSF53178">
    <property type="entry name" value="Peptidyl-tRNA hydrolase-like"/>
    <property type="match status" value="1"/>
</dbReference>
<dbReference type="PROSITE" id="PS01195">
    <property type="entry name" value="PEPT_TRNA_HYDROL_1"/>
    <property type="match status" value="1"/>
</dbReference>
<dbReference type="PROSITE" id="PS01196">
    <property type="entry name" value="PEPT_TRNA_HYDROL_2"/>
    <property type="match status" value="1"/>
</dbReference>
<sequence>MVKLVVGIGNPGRQYVWTRHNIGFLLLDSLASRFLGAFREAPRLYASFAKVEISSEAVVLMKPTTYVNLTGKAVLAAKKFFDVSMEDILVVADDINREFGFVRFRQDCGSGGHNGIKNTTQILQSNHYWQLRLGVGRPSYPGAEGVADYVLSSFSLNEKEKLNDFLEKGIEEIFPWLGC</sequence>
<gene>
    <name evidence="1" type="primary">pth</name>
    <name type="ordered locus">CTLon_0170</name>
</gene>
<protein>
    <recommendedName>
        <fullName evidence="1">Peptidyl-tRNA hydrolase</fullName>
        <shortName evidence="1">Pth</shortName>
        <ecNumber evidence="1">3.1.1.29</ecNumber>
    </recommendedName>
</protein>
<reference key="1">
    <citation type="journal article" date="2008" name="Genome Res.">
        <title>Chlamydia trachomatis: genome sequence analysis of lymphogranuloma venereum isolates.</title>
        <authorList>
            <person name="Thomson N.R."/>
            <person name="Holden M.T.G."/>
            <person name="Carder C."/>
            <person name="Lennard N."/>
            <person name="Lockey S.J."/>
            <person name="Marsh P."/>
            <person name="Skipp P."/>
            <person name="O'Connor C.D."/>
            <person name="Goodhead I."/>
            <person name="Norbertzcak H."/>
            <person name="Harris B."/>
            <person name="Ormond D."/>
            <person name="Rance R."/>
            <person name="Quail M.A."/>
            <person name="Parkhill J."/>
            <person name="Stephens R.S."/>
            <person name="Clarke I.N."/>
        </authorList>
    </citation>
    <scope>NUCLEOTIDE SEQUENCE [LARGE SCALE GENOMIC DNA]</scope>
    <source>
        <strain>UCH-1/proctitis</strain>
    </source>
</reference>